<organismHost>
    <name type="scientific">Homo sapiens</name>
    <name type="common">Human</name>
    <dbReference type="NCBI Taxonomy" id="9606"/>
</organismHost>
<sequence length="205" mass="23378">MSRGALIVFEGLDKSGKTTQCMNIMESIPTNTIKYLNFPQRSTVTGKMIDDYLTRKKTYNDHIVNLLFCANRWEFASFIQEQLEQGITLIVDRYAFSGVAYATAKGASMTLSKSYESGLPKPDLVIFLESGSKEINRNVGEEIYEDVAFQQKVLQEYKKMIEEGEDIHWQIISSEFEEDVKKELIKNIVIEAIHTVTGPVGQLWM</sequence>
<feature type="chain" id="PRO_0000448111" description="Thymidylate kinase">
    <location>
        <begin position="1"/>
        <end position="205"/>
    </location>
</feature>
<feature type="binding site" evidence="2">
    <location>
        <begin position="11"/>
        <end position="18"/>
    </location>
    <ligand>
        <name>ATP</name>
        <dbReference type="ChEBI" id="CHEBI:30616"/>
    </ligand>
</feature>
<reference key="1">
    <citation type="journal article" date="1992" name="J. Gen. Virol.">
        <title>Nucleotide sequence of 21.8 kbp of variola major virus strain Harvey and comparison with vaccinia virus.</title>
        <authorList>
            <person name="Aguado B."/>
            <person name="Selmes I.P."/>
            <person name="Smith G.L."/>
        </authorList>
    </citation>
    <scope>NUCLEOTIDE SEQUENCE [GENOMIC DNA]</scope>
    <source>
        <strain>Harvey</strain>
    </source>
</reference>
<reference key="2">
    <citation type="journal article" date="1993" name="Nature">
        <title>Potential virulence determinants in terminal regions of variola smallpox virus genome.</title>
        <authorList>
            <person name="Massung R.F."/>
            <person name="Esposito J.J."/>
            <person name="Liu L.I."/>
            <person name="Qi J."/>
            <person name="Utterback T.R."/>
            <person name="Knight J.C."/>
            <person name="Aubin L."/>
            <person name="Yuran T.E."/>
            <person name="Parsons J.M."/>
            <person name="Loparev V.N."/>
            <person name="Selivanov N.A."/>
            <person name="Cavallaro K.F."/>
            <person name="Kerlavage A.R."/>
            <person name="Mahy B.W.J."/>
            <person name="Venter J.C."/>
        </authorList>
    </citation>
    <scope>NUCLEOTIDE SEQUENCE [GENOMIC DNA]</scope>
    <source>
        <strain>Bangladesh-1975</strain>
    </source>
</reference>
<proteinExistence type="evidence at transcript level"/>
<organism>
    <name type="scientific">Variola virus</name>
    <dbReference type="NCBI Taxonomy" id="10255"/>
    <lineage>
        <taxon>Viruses</taxon>
        <taxon>Varidnaviria</taxon>
        <taxon>Bamfordvirae</taxon>
        <taxon>Nucleocytoviricota</taxon>
        <taxon>Pokkesviricetes</taxon>
        <taxon>Chitovirales</taxon>
        <taxon>Poxviridae</taxon>
        <taxon>Chordopoxvirinae</taxon>
        <taxon>Orthopoxvirus</taxon>
    </lineage>
</organism>
<gene>
    <name type="primary">OPG178</name>
    <name type="synonym">TMK</name>
    <name type="ORF">A48R</name>
    <name type="ORF">J2R</name>
</gene>
<evidence type="ECO:0000250" key="1">
    <source>
        <dbReference type="UniProtKB" id="Q80HT9"/>
    </source>
</evidence>
<evidence type="ECO:0000305" key="2"/>
<keyword id="KW-0067">ATP-binding</keyword>
<keyword id="KW-0244">Early protein</keyword>
<keyword id="KW-0418">Kinase</keyword>
<keyword id="KW-0545">Nucleotide biosynthesis</keyword>
<keyword id="KW-0547">Nucleotide-binding</keyword>
<keyword id="KW-0808">Transferase</keyword>
<protein>
    <recommendedName>
        <fullName>Thymidylate kinase</fullName>
        <ecNumber>2.7.4.9</ecNumber>
    </recommendedName>
    <alternativeName>
        <fullName>dTMP kinase</fullName>
    </alternativeName>
</protein>
<accession>P0DSV6</accession>
<accession>P33803</accession>
<name>KTHY_VARV</name>
<comment type="function">
    <text evidence="1">Poxvirus TMP kinase is able to phosphorylate dTMP, dUMP and also dGMP from any purine and pyrimidine nucleoside triphosphate. The large substrate specificity is explained by the presence of a canal connecting the edge of the dimer interface to the TMP base binding pocket, canal not found in the human homolog.</text>
</comment>
<comment type="catalytic activity">
    <reaction evidence="1">
        <text>dTMP + ATP = dTDP + ADP</text>
        <dbReference type="Rhea" id="RHEA:13517"/>
        <dbReference type="ChEBI" id="CHEBI:30616"/>
        <dbReference type="ChEBI" id="CHEBI:58369"/>
        <dbReference type="ChEBI" id="CHEBI:63528"/>
        <dbReference type="ChEBI" id="CHEBI:456216"/>
        <dbReference type="EC" id="2.7.4.9"/>
    </reaction>
</comment>
<comment type="pathway">
    <text evidence="1">Pyrimidine metabolism; dTTP biosynthesis.</text>
</comment>
<comment type="subunit">
    <text evidence="1">Homodimer; the dimer arrangement is orthogonal and not antiparallel as in human enzyme.</text>
</comment>
<comment type="induction">
    <text>Expressed in the early phase of the viral replicative cycle.</text>
</comment>
<comment type="similarity">
    <text evidence="2">Belongs to the thymidylate kinase family.</text>
</comment>
<dbReference type="EC" id="2.7.4.9"/>
<dbReference type="EMBL" id="L22579">
    <property type="protein sequence ID" value="AAA60903.1"/>
    <property type="molecule type" value="Genomic_DNA"/>
</dbReference>
<dbReference type="PIR" id="G72170">
    <property type="entry name" value="G72170"/>
</dbReference>
<dbReference type="PIR" id="JQ1855">
    <property type="entry name" value="JQ1855"/>
</dbReference>
<dbReference type="RefSeq" id="NP_042204.1">
    <property type="nucleotide sequence ID" value="NC_001611.1"/>
</dbReference>
<dbReference type="SMR" id="P0DSV6"/>
<dbReference type="GeneID" id="1486448"/>
<dbReference type="KEGG" id="vg:1486448"/>
<dbReference type="UniPathway" id="UPA00575"/>
<dbReference type="Proteomes" id="UP000119805">
    <property type="component" value="Segment"/>
</dbReference>
<dbReference type="GO" id="GO:0005524">
    <property type="term" value="F:ATP binding"/>
    <property type="evidence" value="ECO:0007669"/>
    <property type="project" value="UniProtKB-KW"/>
</dbReference>
<dbReference type="GO" id="GO:0004798">
    <property type="term" value="F:dTMP kinase activity"/>
    <property type="evidence" value="ECO:0007669"/>
    <property type="project" value="UniProtKB-EC"/>
</dbReference>
<dbReference type="GO" id="GO:0004550">
    <property type="term" value="F:nucleoside diphosphate kinase activity"/>
    <property type="evidence" value="ECO:0007669"/>
    <property type="project" value="TreeGrafter"/>
</dbReference>
<dbReference type="GO" id="GO:0006233">
    <property type="term" value="P:dTDP biosynthetic process"/>
    <property type="evidence" value="ECO:0007669"/>
    <property type="project" value="InterPro"/>
</dbReference>
<dbReference type="GO" id="GO:0006235">
    <property type="term" value="P:dTTP biosynthetic process"/>
    <property type="evidence" value="ECO:0007669"/>
    <property type="project" value="UniProtKB-UniPathway"/>
</dbReference>
<dbReference type="GO" id="GO:0006227">
    <property type="term" value="P:dUDP biosynthetic process"/>
    <property type="evidence" value="ECO:0007669"/>
    <property type="project" value="TreeGrafter"/>
</dbReference>
<dbReference type="Gene3D" id="3.40.50.300">
    <property type="entry name" value="P-loop containing nucleotide triphosphate hydrolases"/>
    <property type="match status" value="1"/>
</dbReference>
<dbReference type="InterPro" id="IPR027417">
    <property type="entry name" value="P-loop_NTPase"/>
</dbReference>
<dbReference type="InterPro" id="IPR039430">
    <property type="entry name" value="Thymidylate_kin-like_dom"/>
</dbReference>
<dbReference type="InterPro" id="IPR018094">
    <property type="entry name" value="Thymidylate_kinase"/>
</dbReference>
<dbReference type="NCBIfam" id="TIGR00041">
    <property type="entry name" value="DTMP_kinase"/>
    <property type="match status" value="1"/>
</dbReference>
<dbReference type="PANTHER" id="PTHR10344">
    <property type="entry name" value="THYMIDYLATE KINASE"/>
    <property type="match status" value="1"/>
</dbReference>
<dbReference type="PANTHER" id="PTHR10344:SF1">
    <property type="entry name" value="THYMIDYLATE KINASE"/>
    <property type="match status" value="1"/>
</dbReference>
<dbReference type="Pfam" id="PF02223">
    <property type="entry name" value="Thymidylate_kin"/>
    <property type="match status" value="1"/>
</dbReference>
<dbReference type="SUPFAM" id="SSF52540">
    <property type="entry name" value="P-loop containing nucleoside triphosphate hydrolases"/>
    <property type="match status" value="1"/>
</dbReference>
<dbReference type="PROSITE" id="PS01331">
    <property type="entry name" value="THYMIDYLATE_KINASE"/>
    <property type="match status" value="1"/>
</dbReference>